<reference key="1">
    <citation type="journal article" date="2002" name="Nature">
        <title>The genome sequence of Schizosaccharomyces pombe.</title>
        <authorList>
            <person name="Wood V."/>
            <person name="Gwilliam R."/>
            <person name="Rajandream M.A."/>
            <person name="Lyne M.H."/>
            <person name="Lyne R."/>
            <person name="Stewart A."/>
            <person name="Sgouros J.G."/>
            <person name="Peat N."/>
            <person name="Hayles J."/>
            <person name="Baker S.G."/>
            <person name="Basham D."/>
            <person name="Bowman S."/>
            <person name="Brooks K."/>
            <person name="Brown D."/>
            <person name="Brown S."/>
            <person name="Chillingworth T."/>
            <person name="Churcher C.M."/>
            <person name="Collins M."/>
            <person name="Connor R."/>
            <person name="Cronin A."/>
            <person name="Davis P."/>
            <person name="Feltwell T."/>
            <person name="Fraser A."/>
            <person name="Gentles S."/>
            <person name="Goble A."/>
            <person name="Hamlin N."/>
            <person name="Harris D.E."/>
            <person name="Hidalgo J."/>
            <person name="Hodgson G."/>
            <person name="Holroyd S."/>
            <person name="Hornsby T."/>
            <person name="Howarth S."/>
            <person name="Huckle E.J."/>
            <person name="Hunt S."/>
            <person name="Jagels K."/>
            <person name="James K.D."/>
            <person name="Jones L."/>
            <person name="Jones M."/>
            <person name="Leather S."/>
            <person name="McDonald S."/>
            <person name="McLean J."/>
            <person name="Mooney P."/>
            <person name="Moule S."/>
            <person name="Mungall K.L."/>
            <person name="Murphy L.D."/>
            <person name="Niblett D."/>
            <person name="Odell C."/>
            <person name="Oliver K."/>
            <person name="O'Neil S."/>
            <person name="Pearson D."/>
            <person name="Quail M.A."/>
            <person name="Rabbinowitsch E."/>
            <person name="Rutherford K.M."/>
            <person name="Rutter S."/>
            <person name="Saunders D."/>
            <person name="Seeger K."/>
            <person name="Sharp S."/>
            <person name="Skelton J."/>
            <person name="Simmonds M.N."/>
            <person name="Squares R."/>
            <person name="Squares S."/>
            <person name="Stevens K."/>
            <person name="Taylor K."/>
            <person name="Taylor R.G."/>
            <person name="Tivey A."/>
            <person name="Walsh S.V."/>
            <person name="Warren T."/>
            <person name="Whitehead S."/>
            <person name="Woodward J.R."/>
            <person name="Volckaert G."/>
            <person name="Aert R."/>
            <person name="Robben J."/>
            <person name="Grymonprez B."/>
            <person name="Weltjens I."/>
            <person name="Vanstreels E."/>
            <person name="Rieger M."/>
            <person name="Schaefer M."/>
            <person name="Mueller-Auer S."/>
            <person name="Gabel C."/>
            <person name="Fuchs M."/>
            <person name="Duesterhoeft A."/>
            <person name="Fritzc C."/>
            <person name="Holzer E."/>
            <person name="Moestl D."/>
            <person name="Hilbert H."/>
            <person name="Borzym K."/>
            <person name="Langer I."/>
            <person name="Beck A."/>
            <person name="Lehrach H."/>
            <person name="Reinhardt R."/>
            <person name="Pohl T.M."/>
            <person name="Eger P."/>
            <person name="Zimmermann W."/>
            <person name="Wedler H."/>
            <person name="Wambutt R."/>
            <person name="Purnelle B."/>
            <person name="Goffeau A."/>
            <person name="Cadieu E."/>
            <person name="Dreano S."/>
            <person name="Gloux S."/>
            <person name="Lelaure V."/>
            <person name="Mottier S."/>
            <person name="Galibert F."/>
            <person name="Aves S.J."/>
            <person name="Xiang Z."/>
            <person name="Hunt C."/>
            <person name="Moore K."/>
            <person name="Hurst S.M."/>
            <person name="Lucas M."/>
            <person name="Rochet M."/>
            <person name="Gaillardin C."/>
            <person name="Tallada V.A."/>
            <person name="Garzon A."/>
            <person name="Thode G."/>
            <person name="Daga R.R."/>
            <person name="Cruzado L."/>
            <person name="Jimenez J."/>
            <person name="Sanchez M."/>
            <person name="del Rey F."/>
            <person name="Benito J."/>
            <person name="Dominguez A."/>
            <person name="Revuelta J.L."/>
            <person name="Moreno S."/>
            <person name="Armstrong J."/>
            <person name="Forsburg S.L."/>
            <person name="Cerutti L."/>
            <person name="Lowe T."/>
            <person name="McCombie W.R."/>
            <person name="Paulsen I."/>
            <person name="Potashkin J."/>
            <person name="Shpakovski G.V."/>
            <person name="Ussery D."/>
            <person name="Barrell B.G."/>
            <person name="Nurse P."/>
        </authorList>
    </citation>
    <scope>NUCLEOTIDE SEQUENCE [LARGE SCALE GENOMIC DNA]</scope>
    <source>
        <strain>972 / ATCC 24843</strain>
    </source>
</reference>
<reference key="2">
    <citation type="journal article" date="2019" name="Biochem. Biophys. Res. Commun.">
        <title>Schizosaccharomyces pombe contains separate CC- and A-adding tRNA nucleotidyltransferases.</title>
        <authorList>
            <person name="Reid N.E."/>
            <person name="Ngou J.S."/>
            <person name="Joyce P.B.M."/>
        </authorList>
    </citation>
    <scope>FUNCTION</scope>
    <scope>DOMAIN</scope>
    <scope>CATALYTIC ACTIVITY</scope>
    <scope>MUTAGENESIS OF HIS-121</scope>
</reference>
<reference key="3">
    <citation type="journal article" date="2019" name="Nat. Methods">
        <title>Unbiased screen of RNA tailing activities reveals a poly(UG) polymerase.</title>
        <authorList>
            <person name="Preston M.A."/>
            <person name="Porter D.F."/>
            <person name="Chen F."/>
            <person name="Buter N."/>
            <person name="Lapointe C.P."/>
            <person name="Keles S."/>
            <person name="Kimble J."/>
            <person name="Wickens M."/>
        </authorList>
    </citation>
    <scope>FUNCTION</scope>
</reference>
<name>CCA1_SCHPO</name>
<comment type="function">
    <text evidence="1 2">tRNA nucleotidyltransferase involved in the synthesis of the tRNA CCA terminus. In contrast to what is usually observed in eukaryotes for which one enzyme synthesizes the whole tRNA CCA terminus, in S.pombe, cca1 specifically adds two cytidine residues to a tRNA substrate lacking this sequence while cca2 specifically adds the terminal adenosine residue thereby completing the CCA sequence.</text>
</comment>
<comment type="catalytic activity">
    <reaction evidence="2">
        <text>a tRNA precursor + 2 CTP = a tRNA with a 3' CC end + 2 diphosphate</text>
        <dbReference type="Rhea" id="RHEA:60008"/>
        <dbReference type="Rhea" id="RHEA-COMP:10465"/>
        <dbReference type="Rhea" id="RHEA-COMP:15488"/>
        <dbReference type="ChEBI" id="CHEBI:33019"/>
        <dbReference type="ChEBI" id="CHEBI:37563"/>
        <dbReference type="ChEBI" id="CHEBI:74896"/>
        <dbReference type="ChEBI" id="CHEBI:83069"/>
    </reaction>
</comment>
<comment type="domain">
    <text evidence="5">Cca1 contains two alpha-helices (His-81 to Thr-86 and Glu-479 to Asp-484) and a beta-sheet (His-120 to Lys-131) that are not seen in cca2, suggesting that cca1 has lost A-adding activity because this beta-sheet reduces the flexibility of the loop (Asp-122 to Glu-139) as compared to CCA- and A-adding enzymes.</text>
</comment>
<comment type="domain">
    <text evidence="5">The ERhxxExxxhh motif (residues 231-241) has been suggested to serve to distinguish between A-adding and CC-adding proteins as A-adding enzymes have a small amino acid in the first position while CC-adding enzymes have an E in the first position.</text>
</comment>
<comment type="similarity">
    <text evidence="4">Belongs to the tRNA nucleotidyltransferase/poly(A) polymerase family.</text>
</comment>
<gene>
    <name evidence="3" type="primary">cca1</name>
    <name type="ORF">SPAC1093.04c</name>
</gene>
<evidence type="ECO:0000269" key="1">
    <source>
    </source>
</evidence>
<evidence type="ECO:0000269" key="2">
    <source>
    </source>
</evidence>
<evidence type="ECO:0000303" key="3">
    <source>
    </source>
</evidence>
<evidence type="ECO:0000305" key="4"/>
<evidence type="ECO:0000305" key="5">
    <source>
    </source>
</evidence>
<organism>
    <name type="scientific">Schizosaccharomyces pombe (strain 972 / ATCC 24843)</name>
    <name type="common">Fission yeast</name>
    <dbReference type="NCBI Taxonomy" id="284812"/>
    <lineage>
        <taxon>Eukaryota</taxon>
        <taxon>Fungi</taxon>
        <taxon>Dikarya</taxon>
        <taxon>Ascomycota</taxon>
        <taxon>Taphrinomycotina</taxon>
        <taxon>Schizosaccharomycetes</taxon>
        <taxon>Schizosaccharomycetales</taxon>
        <taxon>Schizosaccharomycetaceae</taxon>
        <taxon>Schizosaccharomyces</taxon>
    </lineage>
</organism>
<keyword id="KW-0548">Nucleotidyltransferase</keyword>
<keyword id="KW-1185">Reference proteome</keyword>
<keyword id="KW-0694">RNA-binding</keyword>
<keyword id="KW-0808">Transferase</keyword>
<keyword id="KW-0820">tRNA-binding</keyword>
<protein>
    <recommendedName>
        <fullName evidence="3">tRNA nucleotidyltransferase cca1</fullName>
        <ecNumber evidence="1">2.7.7.-</ecNumber>
    </recommendedName>
    <alternativeName>
        <fullName evidence="3">CC-adding enzyme cca1</fullName>
    </alternativeName>
    <alternativeName>
        <fullName evidence="3">tRNA cytidyltransferase cca1</fullName>
    </alternativeName>
</protein>
<proteinExistence type="evidence at protein level"/>
<accession>Q9UTQ0</accession>
<feature type="chain" id="PRO_0000139089" description="tRNA nucleotidyltransferase cca1">
    <location>
        <begin position="1"/>
        <end position="500"/>
    </location>
</feature>
<feature type="region of interest" description="Flexible loop" evidence="5">
    <location>
        <begin position="122"/>
        <end position="139"/>
    </location>
</feature>
<feature type="short sequence motif" description="ERhxxExxxhh motif" evidence="5">
    <location>
        <begin position="231"/>
        <end position="241"/>
    </location>
</feature>
<feature type="mutagenesis site" description="Restores the B/A element but does not restore A-adding activity." evidence="1">
    <original>H</original>
    <variation>E</variation>
    <location>
        <position position="121"/>
    </location>
</feature>
<sequence length="500" mass="57553">MASSSSILELNETEKELSDIFLNVSKKIGQMDRKEPEVRFAGGWVRDKLLRIESHDIDVAIDCMSGFEFAQHLQSYLAQQHPDWETKVIKIDANPLKSKHLETATARIMGMDIDIVNLRHHDYTNSNSSNKLVFGTPLEDALRRDATINALFYNLKSKTVEDFTGKGLVDLSNKIIRTPLVADETFGDDPLRAVRCIRFATKYDFNIHEETIKGLKNPELHERLRSSISRERIGVEVDKMLKHCNTNRALKIIHSLGMFACIFGPLEIHTKKLQSKNIESLSLIPYAIDLFGYLQKKDVSIKNLSSSSKYIFWLAIATLPWYNWSILEKSKIKILPPILIRDSLKYSKPIMSQVENFFVHYPLIMSKINVLEKEGKLTRLGCGRLVRELGPHWRDIIDWAFFMNTLISNSDIQRLNKDEEVTWFHVLVKHIEEYGMEEAYNIQPIINGNEITRILGIRPGPHLRKMLDDSIEWRIQNPESTKEDYIAIMLEKGTSAVVDS</sequence>
<dbReference type="EC" id="2.7.7.-" evidence="1"/>
<dbReference type="EMBL" id="CU329670">
    <property type="protein sequence ID" value="CAB60249.2"/>
    <property type="molecule type" value="Genomic_DNA"/>
</dbReference>
<dbReference type="PIR" id="T50067">
    <property type="entry name" value="T50067"/>
</dbReference>
<dbReference type="RefSeq" id="NP_594651.2">
    <property type="nucleotide sequence ID" value="NM_001020080.3"/>
</dbReference>
<dbReference type="BioGRID" id="279415">
    <property type="interactions" value="2"/>
</dbReference>
<dbReference type="FunCoup" id="Q9UTQ0">
    <property type="interactions" value="583"/>
</dbReference>
<dbReference type="STRING" id="284812.Q9UTQ0"/>
<dbReference type="iPTMnet" id="Q9UTQ0"/>
<dbReference type="SwissPalm" id="Q9UTQ0"/>
<dbReference type="PaxDb" id="4896-SPAC1093.04c.1"/>
<dbReference type="EnsemblFungi" id="SPAC1093.04c.1">
    <property type="protein sequence ID" value="SPAC1093.04c.1:pep"/>
    <property type="gene ID" value="SPAC1093.04c"/>
</dbReference>
<dbReference type="GeneID" id="2542977"/>
<dbReference type="KEGG" id="spo:2542977"/>
<dbReference type="PomBase" id="SPAC1093.04c">
    <property type="gene designation" value="cca1"/>
</dbReference>
<dbReference type="VEuPathDB" id="FungiDB:SPAC1093.04c"/>
<dbReference type="eggNOG" id="KOG2159">
    <property type="taxonomic scope" value="Eukaryota"/>
</dbReference>
<dbReference type="HOGENOM" id="CLU_019592_2_1_1"/>
<dbReference type="InParanoid" id="Q9UTQ0"/>
<dbReference type="OMA" id="ASRFNCT"/>
<dbReference type="PhylomeDB" id="Q9UTQ0"/>
<dbReference type="PRO" id="PR:Q9UTQ0"/>
<dbReference type="Proteomes" id="UP000002485">
    <property type="component" value="Chromosome I"/>
</dbReference>
<dbReference type="GO" id="GO:0005829">
    <property type="term" value="C:cytosol"/>
    <property type="evidence" value="ECO:0000269"/>
    <property type="project" value="PomBase"/>
</dbReference>
<dbReference type="GO" id="GO:0005739">
    <property type="term" value="C:mitochondrion"/>
    <property type="evidence" value="ECO:0000269"/>
    <property type="project" value="PomBase"/>
</dbReference>
<dbReference type="GO" id="GO:0052927">
    <property type="term" value="F:CC tRNA cytidylyltransferase activity"/>
    <property type="evidence" value="ECO:0000314"/>
    <property type="project" value="PomBase"/>
</dbReference>
<dbReference type="GO" id="GO:0002135">
    <property type="term" value="F:CTP binding"/>
    <property type="evidence" value="ECO:0000314"/>
    <property type="project" value="PomBase"/>
</dbReference>
<dbReference type="GO" id="GO:0000049">
    <property type="term" value="F:tRNA binding"/>
    <property type="evidence" value="ECO:0000314"/>
    <property type="project" value="PomBase"/>
</dbReference>
<dbReference type="GO" id="GO:1990180">
    <property type="term" value="P:mitochondrial tRNA 3'-end processing"/>
    <property type="evidence" value="ECO:0000314"/>
    <property type="project" value="PomBase"/>
</dbReference>
<dbReference type="GO" id="GO:0001680">
    <property type="term" value="P:tRNA 3'-terminal CCA addition"/>
    <property type="evidence" value="ECO:0000314"/>
    <property type="project" value="PomBase"/>
</dbReference>
<dbReference type="CDD" id="cd05398">
    <property type="entry name" value="NT_ClassII-CCAase"/>
    <property type="match status" value="1"/>
</dbReference>
<dbReference type="FunFam" id="3.30.460.10:FF:000040">
    <property type="entry name" value="tRNA nucleotidyltransferase cca1"/>
    <property type="match status" value="1"/>
</dbReference>
<dbReference type="Gene3D" id="3.30.460.10">
    <property type="entry name" value="Beta Polymerase, domain 2"/>
    <property type="match status" value="1"/>
</dbReference>
<dbReference type="Gene3D" id="1.10.3090.10">
    <property type="entry name" value="cca-adding enzyme, domain 2"/>
    <property type="match status" value="1"/>
</dbReference>
<dbReference type="InterPro" id="IPR043519">
    <property type="entry name" value="NT_sf"/>
</dbReference>
<dbReference type="InterPro" id="IPR002646">
    <property type="entry name" value="PolA_pol_head_dom"/>
</dbReference>
<dbReference type="PANTHER" id="PTHR13734:SF5">
    <property type="entry name" value="CCA TRNA NUCLEOTIDYLTRANSFERASE, MITOCHONDRIAL"/>
    <property type="match status" value="1"/>
</dbReference>
<dbReference type="PANTHER" id="PTHR13734">
    <property type="entry name" value="TRNA-NUCLEOTIDYLTRANSFERASE"/>
    <property type="match status" value="1"/>
</dbReference>
<dbReference type="Pfam" id="PF01743">
    <property type="entry name" value="PolyA_pol"/>
    <property type="match status" value="1"/>
</dbReference>
<dbReference type="SUPFAM" id="SSF81301">
    <property type="entry name" value="Nucleotidyltransferase"/>
    <property type="match status" value="1"/>
</dbReference>
<dbReference type="SUPFAM" id="SSF81891">
    <property type="entry name" value="Poly A polymerase C-terminal region-like"/>
    <property type="match status" value="1"/>
</dbReference>